<accession>O57178</accession>
<organismHost>
    <name type="scientific">Homo sapiens</name>
    <name type="common">Human</name>
    <dbReference type="NCBI Taxonomy" id="9606"/>
</organismHost>
<protein>
    <recommendedName>
        <fullName>Protein OPG056</fullName>
    </recommendedName>
    <alternativeName>
        <fullName>Protein F12</fullName>
    </alternativeName>
</protein>
<feature type="chain" id="PRO_0000343639" description="Protein OPG056">
    <location>
        <begin position="1"/>
        <end position="635"/>
    </location>
</feature>
<proteinExistence type="inferred from homology"/>
<name>PG056_VACCA</name>
<keyword id="KW-0244">Early protein</keyword>
<keyword id="KW-1039">Host endosome</keyword>
<keyword id="KW-0945">Host-virus interaction</keyword>
<keyword id="KW-0426">Late protein</keyword>
<keyword id="KW-0472">Membrane</keyword>
<keyword id="KW-1189">Microtubular outwards viral transport</keyword>
<keyword id="KW-1188">Viral release from host cell</keyword>
<keyword id="KW-0946">Virion</keyword>
<keyword id="KW-0843">Virulence</keyword>
<reference key="1">
    <citation type="journal article" date="1998" name="Virology">
        <title>The complete genomic sequence of the modified vaccinia Ankara strain: comparison with other orthopoxviruses.</title>
        <authorList>
            <person name="Antoine G."/>
            <person name="Scheiflinger F."/>
            <person name="Dorner F."/>
            <person name="Falkner F.G."/>
        </authorList>
    </citation>
    <scope>NUCLEOTIDE SEQUENCE [LARGE SCALE GENOMIC DNA]</scope>
</reference>
<reference key="2">
    <citation type="submission" date="2004-04" db="EMBL/GenBank/DDBJ databases">
        <authorList>
            <person name="Esposito J.J."/>
            <person name="Frace M."/>
            <person name="Sammons S.A."/>
            <person name="Olsen-Rasmussen M.S."/>
            <person name="Osborne J."/>
            <person name="Khristova M."/>
            <person name="Wohlhueter R.M."/>
        </authorList>
    </citation>
    <scope>NUCLEOTIDE SEQUENCE [LARGE SCALE GENOMIC DNA]</scope>
    <source>
        <strain>Isolate Acambis 3000</strain>
    </source>
</reference>
<organism>
    <name type="scientific">Vaccinia virus (strain Ankara)</name>
    <name type="common">VACV</name>
    <dbReference type="NCBI Taxonomy" id="126794"/>
    <lineage>
        <taxon>Viruses</taxon>
        <taxon>Varidnaviria</taxon>
        <taxon>Bamfordvirae</taxon>
        <taxon>Nucleocytoviricota</taxon>
        <taxon>Pokkesviricetes</taxon>
        <taxon>Chitovirales</taxon>
        <taxon>Poxviridae</taxon>
        <taxon>Chordopoxvirinae</taxon>
        <taxon>Orthopoxvirus</taxon>
        <taxon>Vaccinia virus</taxon>
    </lineage>
</organism>
<comment type="function">
    <text evidence="1">Plays a role in intracellular enveloped virus (IEV) transport to the cell surface through microtubule transport. Together with protein OPG064, forms a complex that interacts with host KLC2 (kinesin light chain isoform 2) to engage the kinesin-1 complex and thereby promote IEV trafficking.</text>
</comment>
<comment type="subunit">
    <text evidence="1">Interacts with protein OPG164. Interacts with protein OPG064.</text>
</comment>
<comment type="subcellular location">
    <subcellularLocation>
        <location evidence="1">Virion membrane</location>
    </subcellularLocation>
    <subcellularLocation>
        <location evidence="1">Host endosome</location>
    </subcellularLocation>
    <text evidence="1">Associates with the membrane of IEV particles, but not intracellular mature virus (IMV), cell-associated enveloped virus (CEV) or EEV. Colocalizes with microtubules.</text>
</comment>
<comment type="induction">
    <text evidence="1">Expressed in the early phase of the viral replicative cycle.</text>
</comment>
<comment type="similarity">
    <text evidence="2">Belongs to the orthopoxvirus OPG056 family.</text>
</comment>
<gene>
    <name type="primary">OPG056</name>
    <name type="ordered locus">MVA042L</name>
    <name type="ordered locus">ACAM3000_MVA_042</name>
    <name type="ORF">F12L</name>
</gene>
<sequence>MLNRIQTLMKTANNYETIEILRNYLRLYIILARNEEGHGILIYDDNIDSVMSMMNITILEVIGLTTHCTKLRSSPPIPMSRLFMDEIDHESYYSPKTSDYPLIDIIRKRSHEQGDIALALERYGIENTDSISEINEWLSSKGLACYRFVKFNDYRKQMYRKFSRCTIVDSMIIGHIGHHYIWIKNLETYTRPEIDVLPFDIKYISRDELWARISSSLDQTHIKTIAVSVYGAITDNGPIPYMISTYPGNTFVNFNSVKNLILNFLDWIKDIMTSTRTIILVGYMSNLFDIPLLTVYWPNNCGWKIYNNTLISSDGARVIWMDAYKFSCGLSLQDYCYHWGSKPESRPFDLIKKSDAKRNSKSLVKESMASLKSLYEAFETQSGALEVLMSPCRMFSFSRIEDMFLTSVINRVSENTGMGMYYPTNDIPSLFIESSICLDYIIVNNQESNKYRIKSVLDIISSKQYPAGRPNYVKNGTKGKLYIALCKVTVPTNDHIPVVYHDDDNTTTFITVLTSVDIETAIRAGYSIVELGALQWDNNIPELKNGLLDSIKMIYDLNAVTTNNLLEQLIENINFNNSSIISLFYTFAISYCRAFIYSIMETIDPVYISQFSYKELYVSSSYKDINESMSQMVKL</sequence>
<evidence type="ECO:0000250" key="1">
    <source>
        <dbReference type="UniProtKB" id="Q80HX6"/>
    </source>
</evidence>
<evidence type="ECO:0000305" key="2"/>
<dbReference type="EMBL" id="U94848">
    <property type="protein sequence ID" value="AAB96421.1"/>
    <property type="molecule type" value="Genomic_DNA"/>
</dbReference>
<dbReference type="EMBL" id="AY603355">
    <property type="protein sequence ID" value="AAT10440.1"/>
    <property type="molecule type" value="Genomic_DNA"/>
</dbReference>
<dbReference type="PIR" id="T30788">
    <property type="entry name" value="T30788"/>
</dbReference>
<dbReference type="Proteomes" id="UP000159908">
    <property type="component" value="Segment"/>
</dbReference>
<dbReference type="Proteomes" id="UP000172909">
    <property type="component" value="Segment"/>
</dbReference>
<dbReference type="GO" id="GO:0043657">
    <property type="term" value="C:host cell"/>
    <property type="evidence" value="ECO:0007669"/>
    <property type="project" value="GOC"/>
</dbReference>
<dbReference type="GO" id="GO:0044174">
    <property type="term" value="C:host cell endosome"/>
    <property type="evidence" value="ECO:0007669"/>
    <property type="project" value="UniProtKB-SubCell"/>
</dbReference>
<dbReference type="GO" id="GO:0016020">
    <property type="term" value="C:membrane"/>
    <property type="evidence" value="ECO:0007669"/>
    <property type="project" value="UniProtKB-KW"/>
</dbReference>
<dbReference type="GO" id="GO:0055036">
    <property type="term" value="C:virion membrane"/>
    <property type="evidence" value="ECO:0007669"/>
    <property type="project" value="UniProtKB-SubCell"/>
</dbReference>
<dbReference type="GO" id="GO:0039701">
    <property type="term" value="P:microtubule-dependent intracellular transport of viral material towards cell periphery"/>
    <property type="evidence" value="ECO:0007669"/>
    <property type="project" value="UniProtKB-KW"/>
</dbReference>
<dbReference type="InterPro" id="IPR005005">
    <property type="entry name" value="Poxvirus_F12L"/>
</dbReference>
<dbReference type="InterPro" id="IPR012337">
    <property type="entry name" value="RNaseH-like_sf"/>
</dbReference>
<dbReference type="Pfam" id="PF03337">
    <property type="entry name" value="Pox_F12L"/>
    <property type="match status" value="1"/>
</dbReference>
<dbReference type="PIRSF" id="PIRSF015793">
    <property type="entry name" value="VAC_EEV"/>
    <property type="match status" value="1"/>
</dbReference>
<dbReference type="SUPFAM" id="SSF53098">
    <property type="entry name" value="Ribonuclease H-like"/>
    <property type="match status" value="1"/>
</dbReference>